<sequence>MRFLLKLLSKEKENILLEGFWVLEVRVTTKARENRVVCLEDGILRVRVTEVPEKGKANDAVVALLANFLSIPKSDVTLIAGEASRRKKVLLPRSIKAFLLEQFPSESSSTTGKKS</sequence>
<feature type="chain" id="PRO_1000056762" description="UPF0235 protein CTA_0423">
    <location>
        <begin position="1"/>
        <end position="115"/>
    </location>
</feature>
<gene>
    <name type="ordered locus">CTA_0423</name>
</gene>
<reference key="1">
    <citation type="journal article" date="2005" name="Infect. Immun.">
        <title>Comparative genomic analysis of Chlamydia trachomatis oculotropic and genitotropic strains.</title>
        <authorList>
            <person name="Carlson J.H."/>
            <person name="Porcella S.F."/>
            <person name="McClarty G."/>
            <person name="Caldwell H.D."/>
        </authorList>
    </citation>
    <scope>NUCLEOTIDE SEQUENCE [LARGE SCALE GENOMIC DNA]</scope>
    <source>
        <strain>ATCC VR-571B / DSM 19440 / HAR-13</strain>
    </source>
</reference>
<protein>
    <recommendedName>
        <fullName evidence="1">UPF0235 protein CTA_0423</fullName>
    </recommendedName>
</protein>
<proteinExistence type="inferred from homology"/>
<comment type="similarity">
    <text evidence="1">Belongs to the UPF0235 family.</text>
</comment>
<name>Y423_CHLTA</name>
<dbReference type="EMBL" id="CP000051">
    <property type="protein sequence ID" value="AAX50657.1"/>
    <property type="molecule type" value="Genomic_DNA"/>
</dbReference>
<dbReference type="RefSeq" id="WP_009871740.1">
    <property type="nucleotide sequence ID" value="NC_007429.1"/>
</dbReference>
<dbReference type="SMR" id="Q3KLW5"/>
<dbReference type="KEGG" id="cta:CTA_0423"/>
<dbReference type="HOGENOM" id="CLU_130694_6_2_0"/>
<dbReference type="Proteomes" id="UP000002532">
    <property type="component" value="Chromosome"/>
</dbReference>
<dbReference type="GO" id="GO:0005737">
    <property type="term" value="C:cytoplasm"/>
    <property type="evidence" value="ECO:0007669"/>
    <property type="project" value="TreeGrafter"/>
</dbReference>
<dbReference type="Gene3D" id="3.30.1200.10">
    <property type="entry name" value="YggU-like"/>
    <property type="match status" value="1"/>
</dbReference>
<dbReference type="HAMAP" id="MF_00634">
    <property type="entry name" value="UPF0235"/>
    <property type="match status" value="1"/>
</dbReference>
<dbReference type="InterPro" id="IPR003746">
    <property type="entry name" value="DUF167"/>
</dbReference>
<dbReference type="InterPro" id="IPR036591">
    <property type="entry name" value="YggU-like_sf"/>
</dbReference>
<dbReference type="NCBIfam" id="TIGR00251">
    <property type="entry name" value="DUF167 family protein"/>
    <property type="match status" value="1"/>
</dbReference>
<dbReference type="NCBIfam" id="NF001887">
    <property type="entry name" value="PRK00647.1"/>
    <property type="match status" value="1"/>
</dbReference>
<dbReference type="PANTHER" id="PTHR13420">
    <property type="entry name" value="UPF0235 PROTEIN C15ORF40"/>
    <property type="match status" value="1"/>
</dbReference>
<dbReference type="PANTHER" id="PTHR13420:SF7">
    <property type="entry name" value="UPF0235 PROTEIN C15ORF40"/>
    <property type="match status" value="1"/>
</dbReference>
<dbReference type="Pfam" id="PF02594">
    <property type="entry name" value="DUF167"/>
    <property type="match status" value="1"/>
</dbReference>
<dbReference type="SMART" id="SM01152">
    <property type="entry name" value="DUF167"/>
    <property type="match status" value="1"/>
</dbReference>
<dbReference type="SUPFAM" id="SSF69786">
    <property type="entry name" value="YggU-like"/>
    <property type="match status" value="1"/>
</dbReference>
<accession>Q3KLW5</accession>
<organism>
    <name type="scientific">Chlamydia trachomatis serovar A (strain ATCC VR-571B / DSM 19440 / HAR-13)</name>
    <dbReference type="NCBI Taxonomy" id="315277"/>
    <lineage>
        <taxon>Bacteria</taxon>
        <taxon>Pseudomonadati</taxon>
        <taxon>Chlamydiota</taxon>
        <taxon>Chlamydiia</taxon>
        <taxon>Chlamydiales</taxon>
        <taxon>Chlamydiaceae</taxon>
        <taxon>Chlamydia/Chlamydophila group</taxon>
        <taxon>Chlamydia</taxon>
    </lineage>
</organism>
<evidence type="ECO:0000255" key="1">
    <source>
        <dbReference type="HAMAP-Rule" id="MF_00634"/>
    </source>
</evidence>